<feature type="chain" id="PRO_1000149870" description="UPF0285 protein Maeo_0978">
    <location>
        <begin position="1"/>
        <end position="327"/>
    </location>
</feature>
<protein>
    <recommendedName>
        <fullName evidence="1">UPF0285 protein Maeo_0978</fullName>
    </recommendedName>
</protein>
<dbReference type="EMBL" id="CP000743">
    <property type="protein sequence ID" value="ABR56556.1"/>
    <property type="molecule type" value="Genomic_DNA"/>
</dbReference>
<dbReference type="RefSeq" id="WP_011973688.1">
    <property type="nucleotide sequence ID" value="NC_009635.1"/>
</dbReference>
<dbReference type="SMR" id="A6UVN4"/>
<dbReference type="STRING" id="419665.Maeo_0978"/>
<dbReference type="GeneID" id="5327149"/>
<dbReference type="KEGG" id="mae:Maeo_0978"/>
<dbReference type="eggNOG" id="arCOG04885">
    <property type="taxonomic scope" value="Archaea"/>
</dbReference>
<dbReference type="HOGENOM" id="CLU_846254_0_0_2"/>
<dbReference type="OrthoDB" id="235676at2157"/>
<dbReference type="Proteomes" id="UP000001106">
    <property type="component" value="Chromosome"/>
</dbReference>
<dbReference type="HAMAP" id="MF_01087">
    <property type="entry name" value="UPF0285"/>
    <property type="match status" value="1"/>
</dbReference>
<dbReference type="InterPro" id="IPR043129">
    <property type="entry name" value="ATPase_NBD"/>
</dbReference>
<dbReference type="InterPro" id="IPR016735">
    <property type="entry name" value="Methan_mark_12"/>
</dbReference>
<dbReference type="NCBIfam" id="TIGR03281">
    <property type="entry name" value="methan_mark_12"/>
    <property type="match status" value="1"/>
</dbReference>
<dbReference type="PIRSF" id="PIRSF018783">
    <property type="entry name" value="UCP018783"/>
    <property type="match status" value="1"/>
</dbReference>
<dbReference type="SUPFAM" id="SSF53067">
    <property type="entry name" value="Actin-like ATPase domain"/>
    <property type="match status" value="1"/>
</dbReference>
<organism>
    <name type="scientific">Methanococcus aeolicus (strain ATCC BAA-1280 / DSM 17508 / OCM 812 / Nankai-3)</name>
    <dbReference type="NCBI Taxonomy" id="419665"/>
    <lineage>
        <taxon>Archaea</taxon>
        <taxon>Methanobacteriati</taxon>
        <taxon>Methanobacteriota</taxon>
        <taxon>Methanomada group</taxon>
        <taxon>Methanococci</taxon>
        <taxon>Methanococcales</taxon>
        <taxon>Methanococcaceae</taxon>
        <taxon>Methanococcus</taxon>
    </lineage>
</organism>
<gene>
    <name type="ordered locus">Maeo_0978</name>
</gene>
<name>Y978_META3</name>
<sequence>MITVGIDHGTSGIKVCIKNNDKTITTYFKMSRTELKNKSFLGELNKYENLRDIDLIAMGYSMGDGINEILPIEKVENRGVINIEGVGEKVGGGTKMYDEIKNSNIPTVVIPGLHKNIECIDARFRALYSHMASPEKISIAYCAYKTYGFNNFILSDISSNTVSLLIKDKKLFGGFDACIGAPGLLHGAIDLEMIRDIDSNKITANEAFSTAGVIKVVIDKYKGVENTKEEILKNYKTDEKCKLAIDTLILSVAMEINSLMFLNPDKNIVLAGSIATTKEYNLVDKLKEYIKGNIYILEGESGALGGALIAEDILNGKKDILGIPVNI</sequence>
<accession>A6UVN4</accession>
<evidence type="ECO:0000255" key="1">
    <source>
        <dbReference type="HAMAP-Rule" id="MF_01087"/>
    </source>
</evidence>
<comment type="similarity">
    <text evidence="1">Belongs to the UPF0285 family.</text>
</comment>
<reference key="1">
    <citation type="submission" date="2007-06" db="EMBL/GenBank/DDBJ databases">
        <title>Complete sequence of Methanococcus aeolicus Nankai-3.</title>
        <authorList>
            <consortium name="US DOE Joint Genome Institute"/>
            <person name="Copeland A."/>
            <person name="Lucas S."/>
            <person name="Lapidus A."/>
            <person name="Barry K."/>
            <person name="Glavina del Rio T."/>
            <person name="Dalin E."/>
            <person name="Tice H."/>
            <person name="Pitluck S."/>
            <person name="Chain P."/>
            <person name="Malfatti S."/>
            <person name="Shin M."/>
            <person name="Vergez L."/>
            <person name="Schmutz J."/>
            <person name="Larimer F."/>
            <person name="Land M."/>
            <person name="Hauser L."/>
            <person name="Kyrpides N."/>
            <person name="Lykidis A."/>
            <person name="Sieprawska-Lupa M."/>
            <person name="Whitman W.B."/>
            <person name="Richardson P."/>
        </authorList>
    </citation>
    <scope>NUCLEOTIDE SEQUENCE [LARGE SCALE GENOMIC DNA]</scope>
    <source>
        <strain>ATCC BAA-1280 / DSM 17508 / OCM 812 / Nankai-3</strain>
    </source>
</reference>
<proteinExistence type="inferred from homology"/>